<sequence>MPRRAASPALSENDFDITKSLFNDDIDGNDDDFGNTTTKNVEPLDANGILDLGLESDGDGDGAFISAQQAAANRKASNLKGQSVKKGGGFQAMGLNSHLLKAISRKGFNVPTPIQRKTIPLVLDNQDVVGMARTGSGKTAAFVIPMIEKLRAHSVRVGARALIMSPSRELALQTLKVVKEFGRGTDLKCVLLVGGDSLEEQFGFMAANPDIVIATPGRFLHLKVEMSLDLSSMKYVVFDEADRLFEMGFAAQLGEILHALPISRQTLLFSATLPKSLVEFARAGLQEPSLVRLDAESKVSPDLQSAFFSVKGAEKEGALLHILQDLVKMPTGLPENALNATDNFSKKRKRGPDGPTKKLKPTEHSTIIFAATKHHVDYLASLLRMSGFAVSHAYGSLDQTARNIQVEDFRTGKSNILVVTDVAARGIDIPVLANVINYDFPPQPKVFVHRVGRTARAGQRGWSYSLVRDTDAPYLLDLQLFLGRRLLLGRDCGDSPNYAEDVIVGALQRNEVESKSEWITKLLYDDDDLTALRNVAGKGEKLYVKTRNSASSESAKRAKEVVASKGWMELHPLFKDVTNGAEQARLEMLAKISGFRPNETVFEIGQKGKAAHSEAAEIMRHRREKIIPRRQKEEDEKAAAAAAAAEEDNFDSPAEENDDNDDLEVTVTGGDDDMAEASDGELEVTFSKAAQKGKGRTLSWKDSENFMSYTPKTINTAEERGYGVHSGSYNTASQNSNFVEAARGVTMDLTNDDGAKSFAEPSKAKGMRWDKKNSKYVARANDEDGSKGIKYIRGESGQKIAASFQSGRFDRWRKAHKVDRMPRTGEAEREGPASAGGVGRGFGTRYKHKQERAPKEADKYRDDYHVRKKRVAEAKENRVGSFKDGSGKSEIKSTEDIRKDRKLQERRKAKNARPSKKGKY</sequence>
<accession>A7ESL7</accession>
<feature type="chain" id="PRO_0000310245" description="ATP-dependent RNA helicase dbp10">
    <location>
        <begin position="1"/>
        <end position="920"/>
    </location>
</feature>
<feature type="domain" description="Helicase ATP-binding" evidence="2">
    <location>
        <begin position="119"/>
        <end position="291"/>
    </location>
</feature>
<feature type="domain" description="Helicase C-terminal" evidence="3">
    <location>
        <begin position="339"/>
        <end position="503"/>
    </location>
</feature>
<feature type="region of interest" description="Disordered" evidence="4">
    <location>
        <begin position="337"/>
        <end position="361"/>
    </location>
</feature>
<feature type="region of interest" description="Disordered" evidence="4">
    <location>
        <begin position="623"/>
        <end position="668"/>
    </location>
</feature>
<feature type="region of interest" description="Disordered" evidence="4">
    <location>
        <begin position="749"/>
        <end position="770"/>
    </location>
</feature>
<feature type="region of interest" description="Disordered" evidence="4">
    <location>
        <begin position="813"/>
        <end position="920"/>
    </location>
</feature>
<feature type="short sequence motif" description="Q motif">
    <location>
        <begin position="88"/>
        <end position="116"/>
    </location>
</feature>
<feature type="short sequence motif" description="DEAD box">
    <location>
        <begin position="239"/>
        <end position="242"/>
    </location>
</feature>
<feature type="compositionally biased region" description="Basic and acidic residues" evidence="4">
    <location>
        <begin position="351"/>
        <end position="361"/>
    </location>
</feature>
<feature type="compositionally biased region" description="Basic and acidic residues" evidence="4">
    <location>
        <begin position="623"/>
        <end position="638"/>
    </location>
</feature>
<feature type="compositionally biased region" description="Acidic residues" evidence="4">
    <location>
        <begin position="645"/>
        <end position="668"/>
    </location>
</feature>
<feature type="compositionally biased region" description="Basic and acidic residues" evidence="4">
    <location>
        <begin position="813"/>
        <end position="831"/>
    </location>
</feature>
<feature type="compositionally biased region" description="Basic and acidic residues" evidence="4">
    <location>
        <begin position="851"/>
        <end position="878"/>
    </location>
</feature>
<feature type="compositionally biased region" description="Basic and acidic residues" evidence="4">
    <location>
        <begin position="885"/>
        <end position="903"/>
    </location>
</feature>
<feature type="compositionally biased region" description="Basic residues" evidence="4">
    <location>
        <begin position="904"/>
        <end position="920"/>
    </location>
</feature>
<feature type="binding site" evidence="2">
    <location>
        <begin position="132"/>
        <end position="139"/>
    </location>
    <ligand>
        <name>ATP</name>
        <dbReference type="ChEBI" id="CHEBI:30616"/>
    </ligand>
</feature>
<evidence type="ECO:0000250" key="1"/>
<evidence type="ECO:0000255" key="2">
    <source>
        <dbReference type="PROSITE-ProRule" id="PRU00541"/>
    </source>
</evidence>
<evidence type="ECO:0000255" key="3">
    <source>
        <dbReference type="PROSITE-ProRule" id="PRU00542"/>
    </source>
</evidence>
<evidence type="ECO:0000256" key="4">
    <source>
        <dbReference type="SAM" id="MobiDB-lite"/>
    </source>
</evidence>
<evidence type="ECO:0000305" key="5"/>
<proteinExistence type="inferred from homology"/>
<name>DBP10_SCLS1</name>
<keyword id="KW-0067">ATP-binding</keyword>
<keyword id="KW-0347">Helicase</keyword>
<keyword id="KW-0378">Hydrolase</keyword>
<keyword id="KW-0547">Nucleotide-binding</keyword>
<keyword id="KW-0539">Nucleus</keyword>
<keyword id="KW-1185">Reference proteome</keyword>
<keyword id="KW-0690">Ribosome biogenesis</keyword>
<keyword id="KW-0694">RNA-binding</keyword>
<keyword id="KW-0698">rRNA processing</keyword>
<organism>
    <name type="scientific">Sclerotinia sclerotiorum (strain ATCC 18683 / 1980 / Ss-1)</name>
    <name type="common">White mold</name>
    <name type="synonym">Whetzelinia sclerotiorum</name>
    <dbReference type="NCBI Taxonomy" id="665079"/>
    <lineage>
        <taxon>Eukaryota</taxon>
        <taxon>Fungi</taxon>
        <taxon>Dikarya</taxon>
        <taxon>Ascomycota</taxon>
        <taxon>Pezizomycotina</taxon>
        <taxon>Leotiomycetes</taxon>
        <taxon>Helotiales</taxon>
        <taxon>Sclerotiniaceae</taxon>
        <taxon>Sclerotinia</taxon>
    </lineage>
</organism>
<comment type="function">
    <text evidence="1">ATP-binding RNA helicase involved in the biogenesis of 60S ribosomal subunits and is required for the normal formation of 25S and 5.8S rRNAs.</text>
</comment>
<comment type="catalytic activity">
    <reaction>
        <text>ATP + H2O = ADP + phosphate + H(+)</text>
        <dbReference type="Rhea" id="RHEA:13065"/>
        <dbReference type="ChEBI" id="CHEBI:15377"/>
        <dbReference type="ChEBI" id="CHEBI:15378"/>
        <dbReference type="ChEBI" id="CHEBI:30616"/>
        <dbReference type="ChEBI" id="CHEBI:43474"/>
        <dbReference type="ChEBI" id="CHEBI:456216"/>
        <dbReference type="EC" id="3.6.4.13"/>
    </reaction>
</comment>
<comment type="subcellular location">
    <subcellularLocation>
        <location evidence="1">Nucleus</location>
        <location evidence="1">Nucleolus</location>
    </subcellularLocation>
</comment>
<comment type="domain">
    <text>The Q motif is unique to and characteristic of the DEAD box family of RNA helicases and controls ATP binding and hydrolysis.</text>
</comment>
<comment type="similarity">
    <text evidence="5">Belongs to the DEAD box helicase family. DDX54/DBP10 subfamily.</text>
</comment>
<comment type="sequence caution" evidence="5">
    <conflict type="erroneous gene model prediction">
        <sequence resource="EMBL-CDS" id="EDN92459"/>
    </conflict>
</comment>
<protein>
    <recommendedName>
        <fullName>ATP-dependent RNA helicase dbp10</fullName>
        <ecNumber>3.6.4.13</ecNumber>
    </recommendedName>
</protein>
<gene>
    <name type="primary">dbp10</name>
    <name type="ORF">SS1G_08322</name>
</gene>
<dbReference type="EC" id="3.6.4.13"/>
<dbReference type="EMBL" id="CH476631">
    <property type="protein sequence ID" value="EDN92459.1"/>
    <property type="status" value="ALT_SEQ"/>
    <property type="molecule type" value="Genomic_DNA"/>
</dbReference>
<dbReference type="RefSeq" id="XP_001590582.1">
    <property type="nucleotide sequence ID" value="XM_001590532.1"/>
</dbReference>
<dbReference type="SMR" id="A7ESL7"/>
<dbReference type="FunCoup" id="A7ESL7">
    <property type="interactions" value="998"/>
</dbReference>
<dbReference type="STRING" id="665079.A7ESL7"/>
<dbReference type="GeneID" id="5486702"/>
<dbReference type="KEGG" id="ssl:SS1G_08322"/>
<dbReference type="VEuPathDB" id="FungiDB:sscle_10g076280"/>
<dbReference type="eggNOG" id="KOG0337">
    <property type="taxonomic scope" value="Eukaryota"/>
</dbReference>
<dbReference type="InParanoid" id="A7ESL7"/>
<dbReference type="OrthoDB" id="10261375at2759"/>
<dbReference type="Proteomes" id="UP000001312">
    <property type="component" value="Unassembled WGS sequence"/>
</dbReference>
<dbReference type="GO" id="GO:0005730">
    <property type="term" value="C:nucleolus"/>
    <property type="evidence" value="ECO:0000318"/>
    <property type="project" value="GO_Central"/>
</dbReference>
<dbReference type="GO" id="GO:0005524">
    <property type="term" value="F:ATP binding"/>
    <property type="evidence" value="ECO:0007669"/>
    <property type="project" value="UniProtKB-KW"/>
</dbReference>
<dbReference type="GO" id="GO:0016887">
    <property type="term" value="F:ATP hydrolysis activity"/>
    <property type="evidence" value="ECO:0007669"/>
    <property type="project" value="RHEA"/>
</dbReference>
<dbReference type="GO" id="GO:0003723">
    <property type="term" value="F:RNA binding"/>
    <property type="evidence" value="ECO:0007669"/>
    <property type="project" value="UniProtKB-KW"/>
</dbReference>
<dbReference type="GO" id="GO:0003724">
    <property type="term" value="F:RNA helicase activity"/>
    <property type="evidence" value="ECO:0007669"/>
    <property type="project" value="UniProtKB-EC"/>
</dbReference>
<dbReference type="GO" id="GO:0006364">
    <property type="term" value="P:rRNA processing"/>
    <property type="evidence" value="ECO:0000318"/>
    <property type="project" value="GO_Central"/>
</dbReference>
<dbReference type="CDD" id="cd17959">
    <property type="entry name" value="DEADc_DDX54"/>
    <property type="match status" value="1"/>
</dbReference>
<dbReference type="CDD" id="cd18787">
    <property type="entry name" value="SF2_C_DEAD"/>
    <property type="match status" value="1"/>
</dbReference>
<dbReference type="FunFam" id="3.40.50.300:FF:000865">
    <property type="entry name" value="ATP-dependent RNA helicase DDX54"/>
    <property type="match status" value="1"/>
</dbReference>
<dbReference type="Gene3D" id="3.40.50.300">
    <property type="entry name" value="P-loop containing nucleotide triphosphate hydrolases"/>
    <property type="match status" value="2"/>
</dbReference>
<dbReference type="InterPro" id="IPR012541">
    <property type="entry name" value="DBP10_C"/>
</dbReference>
<dbReference type="InterPro" id="IPR033517">
    <property type="entry name" value="DDX54/DBP10_DEAD-box_helicase"/>
</dbReference>
<dbReference type="InterPro" id="IPR011545">
    <property type="entry name" value="DEAD/DEAH_box_helicase_dom"/>
</dbReference>
<dbReference type="InterPro" id="IPR050079">
    <property type="entry name" value="DEAD_box_RNA_helicase"/>
</dbReference>
<dbReference type="InterPro" id="IPR014001">
    <property type="entry name" value="Helicase_ATP-bd"/>
</dbReference>
<dbReference type="InterPro" id="IPR001650">
    <property type="entry name" value="Helicase_C-like"/>
</dbReference>
<dbReference type="InterPro" id="IPR027417">
    <property type="entry name" value="P-loop_NTPase"/>
</dbReference>
<dbReference type="InterPro" id="IPR000629">
    <property type="entry name" value="RNA-helicase_DEAD-box_CS"/>
</dbReference>
<dbReference type="InterPro" id="IPR014014">
    <property type="entry name" value="RNA_helicase_DEAD_Q_motif"/>
</dbReference>
<dbReference type="PANTHER" id="PTHR47959">
    <property type="entry name" value="ATP-DEPENDENT RNA HELICASE RHLE-RELATED"/>
    <property type="match status" value="1"/>
</dbReference>
<dbReference type="PANTHER" id="PTHR47959:SF8">
    <property type="entry name" value="RNA HELICASE"/>
    <property type="match status" value="1"/>
</dbReference>
<dbReference type="Pfam" id="PF08147">
    <property type="entry name" value="DBP10CT"/>
    <property type="match status" value="1"/>
</dbReference>
<dbReference type="Pfam" id="PF00270">
    <property type="entry name" value="DEAD"/>
    <property type="match status" value="1"/>
</dbReference>
<dbReference type="Pfam" id="PF00271">
    <property type="entry name" value="Helicase_C"/>
    <property type="match status" value="1"/>
</dbReference>
<dbReference type="SMART" id="SM01123">
    <property type="entry name" value="DBP10CT"/>
    <property type="match status" value="1"/>
</dbReference>
<dbReference type="SMART" id="SM00487">
    <property type="entry name" value="DEXDc"/>
    <property type="match status" value="1"/>
</dbReference>
<dbReference type="SMART" id="SM00490">
    <property type="entry name" value="HELICc"/>
    <property type="match status" value="1"/>
</dbReference>
<dbReference type="SUPFAM" id="SSF52540">
    <property type="entry name" value="P-loop containing nucleoside triphosphate hydrolases"/>
    <property type="match status" value="2"/>
</dbReference>
<dbReference type="PROSITE" id="PS00039">
    <property type="entry name" value="DEAD_ATP_HELICASE"/>
    <property type="match status" value="1"/>
</dbReference>
<dbReference type="PROSITE" id="PS51192">
    <property type="entry name" value="HELICASE_ATP_BIND_1"/>
    <property type="match status" value="1"/>
</dbReference>
<dbReference type="PROSITE" id="PS51194">
    <property type="entry name" value="HELICASE_CTER"/>
    <property type="match status" value="1"/>
</dbReference>
<dbReference type="PROSITE" id="PS51195">
    <property type="entry name" value="Q_MOTIF"/>
    <property type="match status" value="1"/>
</dbReference>
<reference key="1">
    <citation type="journal article" date="2011" name="PLoS Genet.">
        <title>Genomic analysis of the necrotrophic fungal pathogens Sclerotinia sclerotiorum and Botrytis cinerea.</title>
        <authorList>
            <person name="Amselem J."/>
            <person name="Cuomo C.A."/>
            <person name="van Kan J.A.L."/>
            <person name="Viaud M."/>
            <person name="Benito E.P."/>
            <person name="Couloux A."/>
            <person name="Coutinho P.M."/>
            <person name="de Vries R.P."/>
            <person name="Dyer P.S."/>
            <person name="Fillinger S."/>
            <person name="Fournier E."/>
            <person name="Gout L."/>
            <person name="Hahn M."/>
            <person name="Kohn L."/>
            <person name="Lapalu N."/>
            <person name="Plummer K.M."/>
            <person name="Pradier J.-M."/>
            <person name="Quevillon E."/>
            <person name="Sharon A."/>
            <person name="Simon A."/>
            <person name="ten Have A."/>
            <person name="Tudzynski B."/>
            <person name="Tudzynski P."/>
            <person name="Wincker P."/>
            <person name="Andrew M."/>
            <person name="Anthouard V."/>
            <person name="Beever R.E."/>
            <person name="Beffa R."/>
            <person name="Benoit I."/>
            <person name="Bouzid O."/>
            <person name="Brault B."/>
            <person name="Chen Z."/>
            <person name="Choquer M."/>
            <person name="Collemare J."/>
            <person name="Cotton P."/>
            <person name="Danchin E.G."/>
            <person name="Da Silva C."/>
            <person name="Gautier A."/>
            <person name="Giraud C."/>
            <person name="Giraud T."/>
            <person name="Gonzalez C."/>
            <person name="Grossetete S."/>
            <person name="Gueldener U."/>
            <person name="Henrissat B."/>
            <person name="Howlett B.J."/>
            <person name="Kodira C."/>
            <person name="Kretschmer M."/>
            <person name="Lappartient A."/>
            <person name="Leroch M."/>
            <person name="Levis C."/>
            <person name="Mauceli E."/>
            <person name="Neuveglise C."/>
            <person name="Oeser B."/>
            <person name="Pearson M."/>
            <person name="Poulain J."/>
            <person name="Poussereau N."/>
            <person name="Quesneville H."/>
            <person name="Rascle C."/>
            <person name="Schumacher J."/>
            <person name="Segurens B."/>
            <person name="Sexton A."/>
            <person name="Silva E."/>
            <person name="Sirven C."/>
            <person name="Soanes D.M."/>
            <person name="Talbot N.J."/>
            <person name="Templeton M."/>
            <person name="Yandava C."/>
            <person name="Yarden O."/>
            <person name="Zeng Q."/>
            <person name="Rollins J.A."/>
            <person name="Lebrun M.-H."/>
            <person name="Dickman M."/>
        </authorList>
    </citation>
    <scope>NUCLEOTIDE SEQUENCE [LARGE SCALE GENOMIC DNA]</scope>
    <source>
        <strain>ATCC 18683 / 1980 / Ss-1</strain>
    </source>
</reference>